<gene>
    <name type="primary">qcr7</name>
    <name type="ORF">20H10.170</name>
    <name type="ORF">NCU08940</name>
</gene>
<proteinExistence type="evidence at protein level"/>
<accession>Q871K1</accession>
<accession>Q1K6S2</accession>
<sequence length="123" mass="14053">MSAPSLVQAVAKRGWLNKMLKPVSNWYINAAGYRQMGLRADDLISEENETVLAALQRLSPKESYDRIYRIRRATQLSLTHKLLPKNEWTTQEEDVPYLRPLIDQIEAEAAEKDALDTLAVVKN</sequence>
<protein>
    <recommendedName>
        <fullName>Cytochrome b-c1 complex subunit 7</fullName>
    </recommendedName>
    <alternativeName>
        <fullName>Complex III subunit 7</fullName>
    </alternativeName>
    <alternativeName>
        <fullName evidence="10">Complex III subunit VII</fullName>
    </alternativeName>
    <alternativeName>
        <fullName>Ubiquinol-cytochrome c reductase complex 12 kDa protein</fullName>
    </alternativeName>
</protein>
<name>QCR7_NEUCR</name>
<reference key="1">
    <citation type="journal article" date="2003" name="Nucleic Acids Res.">
        <title>What's in the genome of a filamentous fungus? Analysis of the Neurospora genome sequence.</title>
        <authorList>
            <person name="Mannhaupt G."/>
            <person name="Montrone C."/>
            <person name="Haase D."/>
            <person name="Mewes H.-W."/>
            <person name="Aign V."/>
            <person name="Hoheisel J.D."/>
            <person name="Fartmann B."/>
            <person name="Nyakatura G."/>
            <person name="Kempken F."/>
            <person name="Maier J."/>
            <person name="Schulte U."/>
        </authorList>
    </citation>
    <scope>NUCLEOTIDE SEQUENCE [LARGE SCALE GENOMIC DNA]</scope>
    <source>
        <strain>ATCC 24698 / 74-OR23-1A / CBS 708.71 / DSM 1257 / FGSC 987</strain>
    </source>
</reference>
<reference key="2">
    <citation type="journal article" date="2003" name="Nature">
        <title>The genome sequence of the filamentous fungus Neurospora crassa.</title>
        <authorList>
            <person name="Galagan J.E."/>
            <person name="Calvo S.E."/>
            <person name="Borkovich K.A."/>
            <person name="Selker E.U."/>
            <person name="Read N.D."/>
            <person name="Jaffe D.B."/>
            <person name="FitzHugh W."/>
            <person name="Ma L.-J."/>
            <person name="Smirnov S."/>
            <person name="Purcell S."/>
            <person name="Rehman B."/>
            <person name="Elkins T."/>
            <person name="Engels R."/>
            <person name="Wang S."/>
            <person name="Nielsen C.B."/>
            <person name="Butler J."/>
            <person name="Endrizzi M."/>
            <person name="Qui D."/>
            <person name="Ianakiev P."/>
            <person name="Bell-Pedersen D."/>
            <person name="Nelson M.A."/>
            <person name="Werner-Washburne M."/>
            <person name="Selitrennikoff C.P."/>
            <person name="Kinsey J.A."/>
            <person name="Braun E.L."/>
            <person name="Zelter A."/>
            <person name="Schulte U."/>
            <person name="Kothe G.O."/>
            <person name="Jedd G."/>
            <person name="Mewes H.-W."/>
            <person name="Staben C."/>
            <person name="Marcotte E."/>
            <person name="Greenberg D."/>
            <person name="Roy A."/>
            <person name="Foley K."/>
            <person name="Naylor J."/>
            <person name="Stange-Thomann N."/>
            <person name="Barrett R."/>
            <person name="Gnerre S."/>
            <person name="Kamal M."/>
            <person name="Kamvysselis M."/>
            <person name="Mauceli E.W."/>
            <person name="Bielke C."/>
            <person name="Rudd S."/>
            <person name="Frishman D."/>
            <person name="Krystofova S."/>
            <person name="Rasmussen C."/>
            <person name="Metzenberg R.L."/>
            <person name="Perkins D.D."/>
            <person name="Kroken S."/>
            <person name="Cogoni C."/>
            <person name="Macino G."/>
            <person name="Catcheside D.E.A."/>
            <person name="Li W."/>
            <person name="Pratt R.J."/>
            <person name="Osmani S.A."/>
            <person name="DeSouza C.P.C."/>
            <person name="Glass N.L."/>
            <person name="Orbach M.J."/>
            <person name="Berglund J.A."/>
            <person name="Voelker R."/>
            <person name="Yarden O."/>
            <person name="Plamann M."/>
            <person name="Seiler S."/>
            <person name="Dunlap J.C."/>
            <person name="Radford A."/>
            <person name="Aramayo R."/>
            <person name="Natvig D.O."/>
            <person name="Alex L.A."/>
            <person name="Mannhaupt G."/>
            <person name="Ebbole D.J."/>
            <person name="Freitag M."/>
            <person name="Paulsen I."/>
            <person name="Sachs M.S."/>
            <person name="Lander E.S."/>
            <person name="Nusbaum C."/>
            <person name="Birren B.W."/>
        </authorList>
    </citation>
    <scope>NUCLEOTIDE SEQUENCE [LARGE SCALE GENOMIC DNA]</scope>
    <source>
        <strain>ATCC 24698 / 74-OR23-1A / CBS 708.71 / DSM 1257 / FGSC 987</strain>
    </source>
</reference>
<reference key="3">
    <citation type="journal article" date="1996" name="Biochem. J.">
        <title>Subunit VII of ubiquinol:cytochrome-c oxidoreductase from Neurospora crassa is functional in yeast and has an N-terminal extension that is not essential for mitochondrial targeting.</title>
        <authorList>
            <person name="Lobo-Hajdu G."/>
            <person name="Braun H.P."/>
            <person name="Romp N."/>
            <person name="Grivell L.A."/>
            <person name="Berden J.A."/>
            <person name="Schmitz U.K."/>
        </authorList>
    </citation>
    <scope>PROTEIN SEQUENCE OF 2-19</scope>
</reference>
<reference key="4">
    <citation type="journal article" date="1979" name="Eur. J. Biochem.">
        <title>Isolation of mitochondrial succinate: ubiquinone reductase, cytochrome c reductase and cytochrome c oxidase from Neurospora crassa using nonionic detergent.</title>
        <authorList>
            <person name="Weiss H."/>
            <person name="Kolb H.J."/>
        </authorList>
    </citation>
    <scope>SUBUNIT</scope>
    <scope>SUBCELLULAR LOCATION</scope>
</reference>
<reference key="5">
    <citation type="journal article" date="1981" name="J. Mol. Biol.">
        <title>Three-dimensional structure of ubiquinol:cytochrome c reductase from Neurospora mitochondria determined by electron microscopy of membrane crystals.</title>
        <authorList>
            <person name="Leonard K."/>
            <person name="Wingfield P."/>
            <person name="Arad T."/>
            <person name="Weiss H."/>
        </authorList>
    </citation>
    <scope>SUBUNIT</scope>
</reference>
<reference key="6">
    <citation type="journal article" date="1983" name="J. Bioenerg. Biomembr.">
        <title>Comparative study of the peptide composition of Complex III (quinol-cytochrome c reductase).</title>
        <authorList>
            <person name="Mendel-Hartvig I."/>
            <person name="Nelson B.D."/>
        </authorList>
    </citation>
    <scope>SUBUNIT</scope>
</reference>
<reference key="7">
    <citation type="journal article" date="1983" name="J. Mol. Biol.">
        <title>Structural studies of cytochrome reductase. Subunit topography determined by electron microscopy of membrane crystals of a subcomplex.</title>
        <authorList>
            <person name="Karlsson B."/>
            <person name="Hovmoeller S."/>
            <person name="Weiss H."/>
            <person name="Leonard K."/>
        </authorList>
    </citation>
    <scope>SUBUNIT</scope>
</reference>
<reference key="8">
    <citation type="journal article" date="1986" name="Eur. J. Biochem.">
        <title>Dimeric ubiquinol:cytochrome c reductase of Neurospora mitochondria contains one cooperative ubiquinone-reduction centre.</title>
        <authorList>
            <person name="Linke P."/>
            <person name="Bechmann G."/>
            <person name="Gothe A."/>
            <person name="Weiss H."/>
        </authorList>
    </citation>
    <scope>FUNCTION OF COMPLEX III</scope>
</reference>
<reference key="9">
    <citation type="journal article" date="1991" name="Eur. J. Biochem.">
        <title>Regulation of the proton/electron stoichiometry of mitochondrial ubiquinol:cytochrome c reductase by the membrane potential.</title>
        <authorList>
            <person name="Bechmann G."/>
            <person name="Weiss H."/>
        </authorList>
    </citation>
    <scope>FUNCTION OF COMPLEX III</scope>
</reference>
<reference key="10">
    <citation type="journal article" date="2007" name="Eukaryot. Cell">
        <title>Supramolecular organization of the respiratory chain in Neurospora crassa mitochondria.</title>
        <authorList>
            <person name="Marques I."/>
            <person name="Dencher N.A."/>
            <person name="Videira A."/>
            <person name="Krause F."/>
        </authorList>
    </citation>
    <scope>COMPOSITION OF THE RESPIRATORY COMPLEX III</scope>
    <scope>IDENTIFICATION BY MASS SPECTROMETRY</scope>
</reference>
<reference key="11">
    <citation type="journal article" date="2009" name="Mol. Microbiol.">
        <title>Effects of mitochondrial complex III disruption in the respiratory chain of Neurospora crassa.</title>
        <authorList>
            <person name="Duarte M."/>
            <person name="Videira A."/>
        </authorList>
    </citation>
    <scope>FUNCTION OF COMPLEX III</scope>
    <scope>SUBUNIT</scope>
</reference>
<evidence type="ECO:0000250" key="1">
    <source>
        <dbReference type="UniProtKB" id="P00128"/>
    </source>
</evidence>
<evidence type="ECO:0000269" key="2">
    <source>
    </source>
</evidence>
<evidence type="ECO:0000269" key="3">
    <source>
    </source>
</evidence>
<evidence type="ECO:0000269" key="4">
    <source>
    </source>
</evidence>
<evidence type="ECO:0000269" key="5">
    <source>
    </source>
</evidence>
<evidence type="ECO:0000269" key="6">
    <source>
    </source>
</evidence>
<evidence type="ECO:0000269" key="7">
    <source>
    </source>
</evidence>
<evidence type="ECO:0000269" key="8">
    <source>
    </source>
</evidence>
<evidence type="ECO:0000269" key="9">
    <source>
    </source>
</evidence>
<evidence type="ECO:0000303" key="10">
    <source>
    </source>
</evidence>
<evidence type="ECO:0000305" key="11"/>
<evidence type="ECO:0000305" key="12">
    <source>
    </source>
</evidence>
<evidence type="ECO:0000305" key="13">
    <source>
    </source>
</evidence>
<comment type="function">
    <text evidence="6 12 13">Component of the ubiquinol-cytochrome c oxidoreductase, a multisubunit transmembrane complex that is part of the mitochondrial electron transport chain which drives oxidative phosphorylation. The respiratory chain contains 3 multisubunit complexes succinate dehydrogenase (complex II, CII), ubiquinol-cytochrome c oxidoreductase (cytochrome b-c1 complex, complex III, CIII) and cytochrome c oxidase (complex IV, CIV), that cooperate to transfer electrons derived from NADH and succinate to molecular oxygen, creating an electrochemical gradient over the inner membrane that drives transmembrane transport and the ATP synthase. The cytochrome b-c1 complex catalyzes electron transfer from ubiquinol to cytochrome c, linking this redox reaction to translocation of protons across the mitochondrial inner membrane, with protons being carried across the membrane as hydrogens on the quinol. In the process called Q cycle, 2 protons are consumed from the matrix, 4 protons are released into the intermembrane space and 2 electrons are passed to cytochrome c.</text>
</comment>
<comment type="subunit">
    <text evidence="2 3 4 5 7 8">Component of the ubiquinol-cytochrome c oxidoreductase (cytochrome b-c1 complex, complex III, CIII), a multisubunit enzyme composed of 10 subunits. The complex is composed of 3 respiratory subunits cytochrome b (cob), cytochrome c1 (cyt-1) and Rieske protein (fes-1), 2 core protein subunits pep and ucr-1, and 5 low-molecular weight protein subunits qcr6, qcr7, qcr8, qcr9 and probably NCU16844/qcr10 (PubMed:18251112, PubMed:226365, PubMed:6273583, PubMed:6302289). The complex exists as an obligatory dimer and forms supercomplexes (SCs) in the inner mitochondrial membrane with NADH-ubiquinone oxidoreductase (complex I, CI) and cytochrome c oxidase (complex IV, CIV), resulting in different assemblies (supercomplexes SCI(1)III(2), SCIII(2)IV(1) and SCIII(2)IV(2) as well as higher order I(x)III(y)IV(z) megacomplexes) (PubMed:17873079, PubMed:19239619).</text>
</comment>
<comment type="subcellular location">
    <subcellularLocation>
        <location evidence="5">Mitochondrion inner membrane</location>
        <topology evidence="1">Peripheral membrane protein</topology>
        <orientation evidence="1">Matrix side</orientation>
    </subcellularLocation>
</comment>
<comment type="similarity">
    <text evidence="11">Belongs to the UQCRB/QCR7 family.</text>
</comment>
<feature type="initiator methionine" description="Removed" evidence="9">
    <location>
        <position position="1"/>
    </location>
</feature>
<feature type="chain" id="PRO_0000193535" description="Cytochrome b-c1 complex subunit 7">
    <location>
        <begin position="2"/>
        <end position="123"/>
    </location>
</feature>
<feature type="sequence conflict" description="In Ref. 3; AA sequence." evidence="11" ref="3">
    <original>G</original>
    <variation>A</variation>
    <location>
        <position position="14"/>
    </location>
</feature>
<dbReference type="EMBL" id="BX294024">
    <property type="protein sequence ID" value="CAD71000.1"/>
    <property type="molecule type" value="Genomic_DNA"/>
</dbReference>
<dbReference type="EMBL" id="CM002240">
    <property type="protein sequence ID" value="EAA31571.1"/>
    <property type="molecule type" value="Genomic_DNA"/>
</dbReference>
<dbReference type="RefSeq" id="XP_960807.1">
    <property type="nucleotide sequence ID" value="XM_955714.3"/>
</dbReference>
<dbReference type="SMR" id="Q871K1"/>
<dbReference type="FunCoup" id="Q871K1">
    <property type="interactions" value="201"/>
</dbReference>
<dbReference type="STRING" id="367110.Q871K1"/>
<dbReference type="PaxDb" id="5141-EFNCRP00000008125"/>
<dbReference type="EnsemblFungi" id="EAA31571">
    <property type="protein sequence ID" value="EAA31571"/>
    <property type="gene ID" value="NCU08940"/>
</dbReference>
<dbReference type="GeneID" id="3876945"/>
<dbReference type="KEGG" id="ncr:NCU08940"/>
<dbReference type="VEuPathDB" id="FungiDB:NCU08940"/>
<dbReference type="HOGENOM" id="CLU_115154_1_0_1"/>
<dbReference type="InParanoid" id="Q871K1"/>
<dbReference type="OMA" id="MAKWEAN"/>
<dbReference type="OrthoDB" id="425749at2759"/>
<dbReference type="Proteomes" id="UP000001805">
    <property type="component" value="Chromosome 2, Linkage Group V"/>
</dbReference>
<dbReference type="GO" id="GO:0099617">
    <property type="term" value="C:matrix side of mitochondrial inner membrane"/>
    <property type="evidence" value="ECO:0000250"/>
    <property type="project" value="UniProtKB"/>
</dbReference>
<dbReference type="GO" id="GO:0045275">
    <property type="term" value="C:respiratory chain complex III"/>
    <property type="evidence" value="ECO:0000314"/>
    <property type="project" value="UniProtKB"/>
</dbReference>
<dbReference type="GO" id="GO:0008121">
    <property type="term" value="F:ubiquinol-cytochrome-c reductase activity"/>
    <property type="evidence" value="ECO:0007669"/>
    <property type="project" value="EnsemblFungi"/>
</dbReference>
<dbReference type="GO" id="GO:0006122">
    <property type="term" value="P:mitochondrial electron transport, ubiquinol to cytochrome c"/>
    <property type="evidence" value="ECO:0000314"/>
    <property type="project" value="UniProtKB"/>
</dbReference>
<dbReference type="GO" id="GO:0034551">
    <property type="term" value="P:mitochondrial respiratory chain complex III assembly"/>
    <property type="evidence" value="ECO:0007669"/>
    <property type="project" value="EnsemblFungi"/>
</dbReference>
<dbReference type="FunFam" id="1.10.1090.10:FF:000001">
    <property type="entry name" value="Cytochrome b-c1 complex subunit 7"/>
    <property type="match status" value="1"/>
</dbReference>
<dbReference type="Gene3D" id="1.10.1090.10">
    <property type="entry name" value="Cytochrome b-c1 complex subunit 7"/>
    <property type="match status" value="1"/>
</dbReference>
<dbReference type="InterPro" id="IPR003197">
    <property type="entry name" value="QCR7"/>
</dbReference>
<dbReference type="InterPro" id="IPR036544">
    <property type="entry name" value="QCR7_sf"/>
</dbReference>
<dbReference type="PANTHER" id="PTHR12022:SF0">
    <property type="entry name" value="CYTOCHROME B-C1 COMPLEX SUBUNIT 7"/>
    <property type="match status" value="1"/>
</dbReference>
<dbReference type="PANTHER" id="PTHR12022">
    <property type="entry name" value="UBIQUINOL-CYTOCHROME C REDUCTASE COMPLEX 14 KD PROTEIN"/>
    <property type="match status" value="1"/>
</dbReference>
<dbReference type="Pfam" id="PF02271">
    <property type="entry name" value="UCR_14kD"/>
    <property type="match status" value="1"/>
</dbReference>
<dbReference type="PIRSF" id="PIRSF000022">
    <property type="entry name" value="Bc1_14K"/>
    <property type="match status" value="1"/>
</dbReference>
<dbReference type="SUPFAM" id="SSF81524">
    <property type="entry name" value="14 kDa protein of cytochrome bc1 complex (Ubiquinol-cytochrome c reductase)"/>
    <property type="match status" value="1"/>
</dbReference>
<organism>
    <name type="scientific">Neurospora crassa (strain ATCC 24698 / 74-OR23-1A / CBS 708.71 / DSM 1257 / FGSC 987)</name>
    <dbReference type="NCBI Taxonomy" id="367110"/>
    <lineage>
        <taxon>Eukaryota</taxon>
        <taxon>Fungi</taxon>
        <taxon>Dikarya</taxon>
        <taxon>Ascomycota</taxon>
        <taxon>Pezizomycotina</taxon>
        <taxon>Sordariomycetes</taxon>
        <taxon>Sordariomycetidae</taxon>
        <taxon>Sordariales</taxon>
        <taxon>Sordariaceae</taxon>
        <taxon>Neurospora</taxon>
    </lineage>
</organism>
<keyword id="KW-0903">Direct protein sequencing</keyword>
<keyword id="KW-0249">Electron transport</keyword>
<keyword id="KW-0472">Membrane</keyword>
<keyword id="KW-0496">Mitochondrion</keyword>
<keyword id="KW-0999">Mitochondrion inner membrane</keyword>
<keyword id="KW-1185">Reference proteome</keyword>
<keyword id="KW-0679">Respiratory chain</keyword>
<keyword id="KW-0813">Transport</keyword>